<name>KDSB_GEOMG</name>
<accession>Q39W63</accession>
<organism>
    <name type="scientific">Geobacter metallireducens (strain ATCC 53774 / DSM 7210 / GS-15)</name>
    <dbReference type="NCBI Taxonomy" id="269799"/>
    <lineage>
        <taxon>Bacteria</taxon>
        <taxon>Pseudomonadati</taxon>
        <taxon>Thermodesulfobacteriota</taxon>
        <taxon>Desulfuromonadia</taxon>
        <taxon>Geobacterales</taxon>
        <taxon>Geobacteraceae</taxon>
        <taxon>Geobacter</taxon>
    </lineage>
</organism>
<gene>
    <name evidence="1" type="primary">kdsB</name>
    <name type="ordered locus">Gmet_1275</name>
</gene>
<feature type="chain" id="PRO_1000003359" description="3-deoxy-manno-octulosonate cytidylyltransferase">
    <location>
        <begin position="1"/>
        <end position="254"/>
    </location>
</feature>
<dbReference type="EC" id="2.7.7.38" evidence="1"/>
<dbReference type="EMBL" id="CP000148">
    <property type="protein sequence ID" value="ABB31511.1"/>
    <property type="molecule type" value="Genomic_DNA"/>
</dbReference>
<dbReference type="RefSeq" id="WP_004512092.1">
    <property type="nucleotide sequence ID" value="NC_007517.1"/>
</dbReference>
<dbReference type="SMR" id="Q39W63"/>
<dbReference type="STRING" id="269799.Gmet_1275"/>
<dbReference type="KEGG" id="gme:Gmet_1275"/>
<dbReference type="eggNOG" id="COG1212">
    <property type="taxonomic scope" value="Bacteria"/>
</dbReference>
<dbReference type="HOGENOM" id="CLU_065038_0_1_7"/>
<dbReference type="UniPathway" id="UPA00030"/>
<dbReference type="UniPathway" id="UPA00358">
    <property type="reaction ID" value="UER00476"/>
</dbReference>
<dbReference type="Proteomes" id="UP000007073">
    <property type="component" value="Chromosome"/>
</dbReference>
<dbReference type="GO" id="GO:0005829">
    <property type="term" value="C:cytosol"/>
    <property type="evidence" value="ECO:0007669"/>
    <property type="project" value="TreeGrafter"/>
</dbReference>
<dbReference type="GO" id="GO:0008690">
    <property type="term" value="F:3-deoxy-manno-octulosonate cytidylyltransferase activity"/>
    <property type="evidence" value="ECO:0007669"/>
    <property type="project" value="UniProtKB-UniRule"/>
</dbReference>
<dbReference type="GO" id="GO:0033468">
    <property type="term" value="P:CMP-keto-3-deoxy-D-manno-octulosonic acid biosynthetic process"/>
    <property type="evidence" value="ECO:0007669"/>
    <property type="project" value="UniProtKB-UniRule"/>
</dbReference>
<dbReference type="GO" id="GO:0009103">
    <property type="term" value="P:lipopolysaccharide biosynthetic process"/>
    <property type="evidence" value="ECO:0007669"/>
    <property type="project" value="UniProtKB-UniRule"/>
</dbReference>
<dbReference type="CDD" id="cd02517">
    <property type="entry name" value="CMP-KDO-Synthetase"/>
    <property type="match status" value="1"/>
</dbReference>
<dbReference type="FunFam" id="3.90.550.10:FF:000011">
    <property type="entry name" value="3-deoxy-manno-octulosonate cytidylyltransferase"/>
    <property type="match status" value="1"/>
</dbReference>
<dbReference type="Gene3D" id="3.90.550.10">
    <property type="entry name" value="Spore Coat Polysaccharide Biosynthesis Protein SpsA, Chain A"/>
    <property type="match status" value="1"/>
</dbReference>
<dbReference type="HAMAP" id="MF_00057">
    <property type="entry name" value="KdsB"/>
    <property type="match status" value="1"/>
</dbReference>
<dbReference type="InterPro" id="IPR003329">
    <property type="entry name" value="Cytidylyl_trans"/>
</dbReference>
<dbReference type="InterPro" id="IPR004528">
    <property type="entry name" value="KdsB"/>
</dbReference>
<dbReference type="InterPro" id="IPR029044">
    <property type="entry name" value="Nucleotide-diphossugar_trans"/>
</dbReference>
<dbReference type="NCBIfam" id="TIGR00466">
    <property type="entry name" value="kdsB"/>
    <property type="match status" value="1"/>
</dbReference>
<dbReference type="NCBIfam" id="NF003950">
    <property type="entry name" value="PRK05450.1-3"/>
    <property type="match status" value="1"/>
</dbReference>
<dbReference type="NCBIfam" id="NF003952">
    <property type="entry name" value="PRK05450.1-5"/>
    <property type="match status" value="1"/>
</dbReference>
<dbReference type="NCBIfam" id="NF009905">
    <property type="entry name" value="PRK13368.1"/>
    <property type="match status" value="1"/>
</dbReference>
<dbReference type="PANTHER" id="PTHR42866">
    <property type="entry name" value="3-DEOXY-MANNO-OCTULOSONATE CYTIDYLYLTRANSFERASE"/>
    <property type="match status" value="1"/>
</dbReference>
<dbReference type="PANTHER" id="PTHR42866:SF2">
    <property type="entry name" value="3-DEOXY-MANNO-OCTULOSONATE CYTIDYLYLTRANSFERASE, MITOCHONDRIAL"/>
    <property type="match status" value="1"/>
</dbReference>
<dbReference type="Pfam" id="PF02348">
    <property type="entry name" value="CTP_transf_3"/>
    <property type="match status" value="1"/>
</dbReference>
<dbReference type="SUPFAM" id="SSF53448">
    <property type="entry name" value="Nucleotide-diphospho-sugar transferases"/>
    <property type="match status" value="1"/>
</dbReference>
<keyword id="KW-0963">Cytoplasm</keyword>
<keyword id="KW-0448">Lipopolysaccharide biosynthesis</keyword>
<keyword id="KW-0548">Nucleotidyltransferase</keyword>
<keyword id="KW-1185">Reference proteome</keyword>
<keyword id="KW-0808">Transferase</keyword>
<reference key="1">
    <citation type="journal article" date="2009" name="BMC Microbiol.">
        <title>The genome sequence of Geobacter metallireducens: features of metabolism, physiology and regulation common and dissimilar to Geobacter sulfurreducens.</title>
        <authorList>
            <person name="Aklujkar M."/>
            <person name="Krushkal J."/>
            <person name="DiBartolo G."/>
            <person name="Lapidus A."/>
            <person name="Land M.L."/>
            <person name="Lovley D.R."/>
        </authorList>
    </citation>
    <scope>NUCLEOTIDE SEQUENCE [LARGE SCALE GENOMIC DNA]</scope>
    <source>
        <strain>ATCC 53774 / DSM 7210 / GS-15</strain>
    </source>
</reference>
<evidence type="ECO:0000255" key="1">
    <source>
        <dbReference type="HAMAP-Rule" id="MF_00057"/>
    </source>
</evidence>
<sequence length="254" mass="28303">MKITAIIPARYASTRFPGKALAEIIGKPMVQHVYERTAKAGLVSEVIVATDDERVAEAVRAFGGRVEMTSATHETGTDRLAEVAARIDADIIVNVQGDEPLIEPAMIDEAIAPLVADASIRMGTLKSRIKSLHDFLSPNVVKVVTDREGDALYFSRSPLPNFRDKWNDLKDEAFVTGRLLCYKHVGLYVYRRDFLLAFARMAPTPLELAEKLEQLRVLENGFRIRVVETSFESIGVDTPSDLDKVVEKLSRFQI</sequence>
<protein>
    <recommendedName>
        <fullName evidence="1">3-deoxy-manno-octulosonate cytidylyltransferase</fullName>
        <ecNumber evidence="1">2.7.7.38</ecNumber>
    </recommendedName>
    <alternativeName>
        <fullName evidence="1">CMP-2-keto-3-deoxyoctulosonic acid synthase</fullName>
        <shortName evidence="1">CKS</shortName>
        <shortName evidence="1">CMP-KDO synthase</shortName>
    </alternativeName>
</protein>
<comment type="function">
    <text evidence="1">Activates KDO (a required 8-carbon sugar) for incorporation into bacterial lipopolysaccharide in Gram-negative bacteria.</text>
</comment>
<comment type="catalytic activity">
    <reaction evidence="1">
        <text>3-deoxy-alpha-D-manno-oct-2-ulosonate + CTP = CMP-3-deoxy-beta-D-manno-octulosonate + diphosphate</text>
        <dbReference type="Rhea" id="RHEA:23448"/>
        <dbReference type="ChEBI" id="CHEBI:33019"/>
        <dbReference type="ChEBI" id="CHEBI:37563"/>
        <dbReference type="ChEBI" id="CHEBI:85986"/>
        <dbReference type="ChEBI" id="CHEBI:85987"/>
        <dbReference type="EC" id="2.7.7.38"/>
    </reaction>
</comment>
<comment type="pathway">
    <text evidence="1">Nucleotide-sugar biosynthesis; CMP-3-deoxy-D-manno-octulosonate biosynthesis; CMP-3-deoxy-D-manno-octulosonate from 3-deoxy-D-manno-octulosonate and CTP: step 1/1.</text>
</comment>
<comment type="pathway">
    <text evidence="1">Bacterial outer membrane biogenesis; lipopolysaccharide biosynthesis.</text>
</comment>
<comment type="subcellular location">
    <subcellularLocation>
        <location evidence="1">Cytoplasm</location>
    </subcellularLocation>
</comment>
<comment type="similarity">
    <text evidence="1">Belongs to the KdsB family.</text>
</comment>
<proteinExistence type="inferred from homology"/>